<name>PPTC7_HUMAN</name>
<sequence length="304" mass="32646">MFSVLSYGRLVARAVLGGLSQTDPRAGGGGGGDYGLVTAGCGFGKDFRKGLLKKGACYGDDACFVARHRSADVLGVADGVGGWRDYGVDPSQFSGTLMRTCERLVKEGRFVPSNPIGILTTSYCELLQNKVPLLGSSTACIVVLDRTSHRLHTANLGDSGFLVVRGGEVVHRSDEQQHYFNTPFQLSIAPPEAEGVVLSDSPDAADSTSFDVQLGDIILTATDGLFDNMPDYMILQELKKLKNSNYESIQQTARSIAEQAHELAYDPNYMSPFAQFACDNGLNVRGGKPDDITVLLSIVAEYTD</sequence>
<gene>
    <name type="primary">PPTC7</name>
    <name type="synonym">TAPP2C</name>
</gene>
<proteinExistence type="evidence at protein level"/>
<protein>
    <recommendedName>
        <fullName>Protein phosphatase PTC7 homolog</fullName>
        <ecNumber evidence="4 7">3.1.3.16</ecNumber>
    </recommendedName>
    <alternativeName>
        <fullName>T-cell activation protein phosphatase 2C</fullName>
        <shortName>TA-PP2C</shortName>
    </alternativeName>
    <alternativeName>
        <fullName>T-cell activation protein phosphatase 2C-like</fullName>
    </alternativeName>
</protein>
<dbReference type="EC" id="3.1.3.16" evidence="4 7"/>
<dbReference type="EMBL" id="AF385435">
    <property type="protein sequence ID" value="AAM43836.1"/>
    <property type="molecule type" value="mRNA"/>
</dbReference>
<dbReference type="EMBL" id="AY357944">
    <property type="protein sequence ID" value="AAQ57274.1"/>
    <property type="molecule type" value="mRNA"/>
</dbReference>
<dbReference type="EMBL" id="AK124744">
    <property type="protein sequence ID" value="BAG54087.1"/>
    <property type="molecule type" value="mRNA"/>
</dbReference>
<dbReference type="EMBL" id="CH471054">
    <property type="protein sequence ID" value="EAW97928.1"/>
    <property type="molecule type" value="Genomic_DNA"/>
</dbReference>
<dbReference type="EMBL" id="BC111551">
    <property type="protein sequence ID" value="AAI11552.1"/>
    <property type="molecule type" value="mRNA"/>
</dbReference>
<dbReference type="EMBL" id="CR749216">
    <property type="protein sequence ID" value="CAH18073.1"/>
    <property type="molecule type" value="mRNA"/>
</dbReference>
<dbReference type="CCDS" id="CCDS9149.1"/>
<dbReference type="RefSeq" id="NP_644812.1">
    <property type="nucleotide sequence ID" value="NM_139283.2"/>
</dbReference>
<dbReference type="SMR" id="Q8NI37"/>
<dbReference type="BioGRID" id="127764">
    <property type="interactions" value="76"/>
</dbReference>
<dbReference type="FunCoup" id="Q8NI37">
    <property type="interactions" value="2014"/>
</dbReference>
<dbReference type="IntAct" id="Q8NI37">
    <property type="interactions" value="74"/>
</dbReference>
<dbReference type="STRING" id="9606.ENSP00000346255"/>
<dbReference type="DEPOD" id="PPTC7"/>
<dbReference type="iPTMnet" id="Q8NI37"/>
<dbReference type="PhosphoSitePlus" id="Q8NI37"/>
<dbReference type="BioMuta" id="PPTC7"/>
<dbReference type="DMDM" id="74715714"/>
<dbReference type="jPOST" id="Q8NI37"/>
<dbReference type="MassIVE" id="Q8NI37"/>
<dbReference type="PaxDb" id="9606-ENSP00000346255"/>
<dbReference type="PeptideAtlas" id="Q8NI37"/>
<dbReference type="ProteomicsDB" id="73828"/>
<dbReference type="Pumba" id="Q8NI37"/>
<dbReference type="Antibodypedia" id="50198">
    <property type="antibodies" value="109 antibodies from 17 providers"/>
</dbReference>
<dbReference type="DNASU" id="160760"/>
<dbReference type="Ensembl" id="ENST00000354300.5">
    <property type="protein sequence ID" value="ENSP00000346255.3"/>
    <property type="gene ID" value="ENSG00000196850.6"/>
</dbReference>
<dbReference type="GeneID" id="160760"/>
<dbReference type="KEGG" id="hsa:160760"/>
<dbReference type="MANE-Select" id="ENST00000354300.5">
    <property type="protein sequence ID" value="ENSP00000346255.3"/>
    <property type="RefSeq nucleotide sequence ID" value="NM_139283.2"/>
    <property type="RefSeq protein sequence ID" value="NP_644812.1"/>
</dbReference>
<dbReference type="UCSC" id="uc001trh.2">
    <property type="organism name" value="human"/>
</dbReference>
<dbReference type="AGR" id="HGNC:30695"/>
<dbReference type="CTD" id="160760"/>
<dbReference type="GeneCards" id="PPTC7"/>
<dbReference type="HGNC" id="HGNC:30695">
    <property type="gene designation" value="PPTC7"/>
</dbReference>
<dbReference type="HPA" id="ENSG00000196850">
    <property type="expression patterns" value="Tissue enhanced (tongue)"/>
</dbReference>
<dbReference type="MIM" id="609668">
    <property type="type" value="gene"/>
</dbReference>
<dbReference type="neXtProt" id="NX_Q8NI37"/>
<dbReference type="OpenTargets" id="ENSG00000196850"/>
<dbReference type="PharmGKB" id="PA143485580"/>
<dbReference type="VEuPathDB" id="HostDB:ENSG00000196850"/>
<dbReference type="eggNOG" id="KOG1379">
    <property type="taxonomic scope" value="Eukaryota"/>
</dbReference>
<dbReference type="GeneTree" id="ENSGT00390000011937"/>
<dbReference type="HOGENOM" id="CLU_029404_3_0_1"/>
<dbReference type="InParanoid" id="Q8NI37"/>
<dbReference type="OMA" id="ANTIAWM"/>
<dbReference type="OrthoDB" id="60843at2759"/>
<dbReference type="PAN-GO" id="Q8NI37">
    <property type="GO annotations" value="1 GO annotation based on evolutionary models"/>
</dbReference>
<dbReference type="PhylomeDB" id="Q8NI37"/>
<dbReference type="TreeFam" id="TF315105"/>
<dbReference type="PathwayCommons" id="Q8NI37"/>
<dbReference type="SignaLink" id="Q8NI37"/>
<dbReference type="BioGRID-ORCS" id="160760">
    <property type="hits" value="24 hits in 1161 CRISPR screens"/>
</dbReference>
<dbReference type="ChiTaRS" id="PPTC7">
    <property type="organism name" value="human"/>
</dbReference>
<dbReference type="GenomeRNAi" id="160760"/>
<dbReference type="Pharos" id="Q8NI37">
    <property type="development level" value="Tbio"/>
</dbReference>
<dbReference type="PRO" id="PR:Q8NI37"/>
<dbReference type="Proteomes" id="UP000005640">
    <property type="component" value="Chromosome 12"/>
</dbReference>
<dbReference type="RNAct" id="Q8NI37">
    <property type="molecule type" value="protein"/>
</dbReference>
<dbReference type="Bgee" id="ENSG00000196850">
    <property type="expression patterns" value="Expressed in left ventricle myocardium and 195 other cell types or tissues"/>
</dbReference>
<dbReference type="GO" id="GO:0005759">
    <property type="term" value="C:mitochondrial matrix"/>
    <property type="evidence" value="ECO:0000315"/>
    <property type="project" value="UniProtKB"/>
</dbReference>
<dbReference type="GO" id="GO:0005741">
    <property type="term" value="C:mitochondrial outer membrane"/>
    <property type="evidence" value="ECO:0000314"/>
    <property type="project" value="UniProt"/>
</dbReference>
<dbReference type="GO" id="GO:0005739">
    <property type="term" value="C:mitochondrion"/>
    <property type="evidence" value="ECO:0006056"/>
    <property type="project" value="FlyBase"/>
</dbReference>
<dbReference type="GO" id="GO:0046872">
    <property type="term" value="F:metal ion binding"/>
    <property type="evidence" value="ECO:0007669"/>
    <property type="project" value="UniProtKB-KW"/>
</dbReference>
<dbReference type="GO" id="GO:0004722">
    <property type="term" value="F:protein serine/threonine phosphatase activity"/>
    <property type="evidence" value="ECO:0000314"/>
    <property type="project" value="UniProtKB"/>
</dbReference>
<dbReference type="GO" id="GO:0030674">
    <property type="term" value="F:protein-macromolecule adaptor activity"/>
    <property type="evidence" value="ECO:0000314"/>
    <property type="project" value="UniProt"/>
</dbReference>
<dbReference type="GO" id="GO:1901525">
    <property type="term" value="P:negative regulation of mitophagy"/>
    <property type="evidence" value="ECO:0000314"/>
    <property type="project" value="UniProt"/>
</dbReference>
<dbReference type="GO" id="GO:1904775">
    <property type="term" value="P:positive regulation of ubiquinone biosynthetic process"/>
    <property type="evidence" value="ECO:0000315"/>
    <property type="project" value="UniProtKB"/>
</dbReference>
<dbReference type="GO" id="GO:0010795">
    <property type="term" value="P:regulation of ubiquinone biosynthetic process"/>
    <property type="evidence" value="ECO:0000318"/>
    <property type="project" value="GO_Central"/>
</dbReference>
<dbReference type="FunFam" id="3.60.40.10:FF:000009">
    <property type="entry name" value="Blast:Protein phosphatase PTC7 homolog"/>
    <property type="match status" value="1"/>
</dbReference>
<dbReference type="Gene3D" id="3.60.40.10">
    <property type="entry name" value="PPM-type phosphatase domain"/>
    <property type="match status" value="1"/>
</dbReference>
<dbReference type="InterPro" id="IPR036457">
    <property type="entry name" value="PPM-type-like_dom_sf"/>
</dbReference>
<dbReference type="InterPro" id="IPR001932">
    <property type="entry name" value="PPM-type_phosphatase-like_dom"/>
</dbReference>
<dbReference type="InterPro" id="IPR039123">
    <property type="entry name" value="PPTC7"/>
</dbReference>
<dbReference type="PANTHER" id="PTHR12320">
    <property type="entry name" value="PROTEIN PHOSPHATASE 2C"/>
    <property type="match status" value="1"/>
</dbReference>
<dbReference type="PANTHER" id="PTHR12320:SF1">
    <property type="entry name" value="PROTEIN PHOSPHATASE PTC7 HOMOLOG"/>
    <property type="match status" value="1"/>
</dbReference>
<dbReference type="Pfam" id="PF07228">
    <property type="entry name" value="SpoIIE"/>
    <property type="match status" value="1"/>
</dbReference>
<dbReference type="SMART" id="SM00331">
    <property type="entry name" value="PP2C_SIG"/>
    <property type="match status" value="1"/>
</dbReference>
<dbReference type="SMART" id="SM00332">
    <property type="entry name" value="PP2Cc"/>
    <property type="match status" value="1"/>
</dbReference>
<dbReference type="SUPFAM" id="SSF81606">
    <property type="entry name" value="PP2C-like"/>
    <property type="match status" value="1"/>
</dbReference>
<dbReference type="PROSITE" id="PS51746">
    <property type="entry name" value="PPM_2"/>
    <property type="match status" value="1"/>
</dbReference>
<accession>Q8NI37</accession>
<accession>B3KWC5</accession>
<accession>Q68DZ7</accession>
<accession>Q6UY82</accession>
<reference key="1">
    <citation type="journal article" date="2004" name="Genomics">
        <title>T lymphocyte activation gene identification by coregulated expression on DNA microarrays.</title>
        <authorList>
            <person name="Mao M."/>
            <person name="Biery M.C."/>
            <person name="Kobayashi S.V."/>
            <person name="Ward T."/>
            <person name="Schimmack G."/>
            <person name="Burchard J."/>
            <person name="Schelter J.M."/>
            <person name="Dai H."/>
            <person name="He Y.D."/>
            <person name="Linsley P.S."/>
        </authorList>
    </citation>
    <scope>NUCLEOTIDE SEQUENCE [MRNA]</scope>
    <scope>INDUCTION</scope>
</reference>
<reference key="2">
    <citation type="submission" date="2003-08" db="EMBL/GenBank/DDBJ databases">
        <authorList>
            <person name="Zhou G."/>
            <person name="Zhong G."/>
            <person name="Yu R."/>
            <person name="Li H."/>
            <person name="Shen C."/>
            <person name="Li M."/>
            <person name="Ke R."/>
            <person name="Xiao W."/>
            <person name="Zheng G."/>
            <person name="Lin L."/>
            <person name="Yang S."/>
        </authorList>
    </citation>
    <scope>NUCLEOTIDE SEQUENCE [LARGE SCALE MRNA]</scope>
</reference>
<reference key="3">
    <citation type="journal article" date="2004" name="Nat. Genet.">
        <title>Complete sequencing and characterization of 21,243 full-length human cDNAs.</title>
        <authorList>
            <person name="Ota T."/>
            <person name="Suzuki Y."/>
            <person name="Nishikawa T."/>
            <person name="Otsuki T."/>
            <person name="Sugiyama T."/>
            <person name="Irie R."/>
            <person name="Wakamatsu A."/>
            <person name="Hayashi K."/>
            <person name="Sato H."/>
            <person name="Nagai K."/>
            <person name="Kimura K."/>
            <person name="Makita H."/>
            <person name="Sekine M."/>
            <person name="Obayashi M."/>
            <person name="Nishi T."/>
            <person name="Shibahara T."/>
            <person name="Tanaka T."/>
            <person name="Ishii S."/>
            <person name="Yamamoto J."/>
            <person name="Saito K."/>
            <person name="Kawai Y."/>
            <person name="Isono Y."/>
            <person name="Nakamura Y."/>
            <person name="Nagahari K."/>
            <person name="Murakami K."/>
            <person name="Yasuda T."/>
            <person name="Iwayanagi T."/>
            <person name="Wagatsuma M."/>
            <person name="Shiratori A."/>
            <person name="Sudo H."/>
            <person name="Hosoiri T."/>
            <person name="Kaku Y."/>
            <person name="Kodaira H."/>
            <person name="Kondo H."/>
            <person name="Sugawara M."/>
            <person name="Takahashi M."/>
            <person name="Kanda K."/>
            <person name="Yokoi T."/>
            <person name="Furuya T."/>
            <person name="Kikkawa E."/>
            <person name="Omura Y."/>
            <person name="Abe K."/>
            <person name="Kamihara K."/>
            <person name="Katsuta N."/>
            <person name="Sato K."/>
            <person name="Tanikawa M."/>
            <person name="Yamazaki M."/>
            <person name="Ninomiya K."/>
            <person name="Ishibashi T."/>
            <person name="Yamashita H."/>
            <person name="Murakawa K."/>
            <person name="Fujimori K."/>
            <person name="Tanai H."/>
            <person name="Kimata M."/>
            <person name="Watanabe M."/>
            <person name="Hiraoka S."/>
            <person name="Chiba Y."/>
            <person name="Ishida S."/>
            <person name="Ono Y."/>
            <person name="Takiguchi S."/>
            <person name="Watanabe S."/>
            <person name="Yosida M."/>
            <person name="Hotuta T."/>
            <person name="Kusano J."/>
            <person name="Kanehori K."/>
            <person name="Takahashi-Fujii A."/>
            <person name="Hara H."/>
            <person name="Tanase T.-O."/>
            <person name="Nomura Y."/>
            <person name="Togiya S."/>
            <person name="Komai F."/>
            <person name="Hara R."/>
            <person name="Takeuchi K."/>
            <person name="Arita M."/>
            <person name="Imose N."/>
            <person name="Musashino K."/>
            <person name="Yuuki H."/>
            <person name="Oshima A."/>
            <person name="Sasaki N."/>
            <person name="Aotsuka S."/>
            <person name="Yoshikawa Y."/>
            <person name="Matsunawa H."/>
            <person name="Ichihara T."/>
            <person name="Shiohata N."/>
            <person name="Sano S."/>
            <person name="Moriya S."/>
            <person name="Momiyama H."/>
            <person name="Satoh N."/>
            <person name="Takami S."/>
            <person name="Terashima Y."/>
            <person name="Suzuki O."/>
            <person name="Nakagawa S."/>
            <person name="Senoh A."/>
            <person name="Mizoguchi H."/>
            <person name="Goto Y."/>
            <person name="Shimizu F."/>
            <person name="Wakebe H."/>
            <person name="Hishigaki H."/>
            <person name="Watanabe T."/>
            <person name="Sugiyama A."/>
            <person name="Takemoto M."/>
            <person name="Kawakami B."/>
            <person name="Yamazaki M."/>
            <person name="Watanabe K."/>
            <person name="Kumagai A."/>
            <person name="Itakura S."/>
            <person name="Fukuzumi Y."/>
            <person name="Fujimori Y."/>
            <person name="Komiyama M."/>
            <person name="Tashiro H."/>
            <person name="Tanigami A."/>
            <person name="Fujiwara T."/>
            <person name="Ono T."/>
            <person name="Yamada K."/>
            <person name="Fujii Y."/>
            <person name="Ozaki K."/>
            <person name="Hirao M."/>
            <person name="Ohmori Y."/>
            <person name="Kawabata A."/>
            <person name="Hikiji T."/>
            <person name="Kobatake N."/>
            <person name="Inagaki H."/>
            <person name="Ikema Y."/>
            <person name="Okamoto S."/>
            <person name="Okitani R."/>
            <person name="Kawakami T."/>
            <person name="Noguchi S."/>
            <person name="Itoh T."/>
            <person name="Shigeta K."/>
            <person name="Senba T."/>
            <person name="Matsumura K."/>
            <person name="Nakajima Y."/>
            <person name="Mizuno T."/>
            <person name="Morinaga M."/>
            <person name="Sasaki M."/>
            <person name="Togashi T."/>
            <person name="Oyama M."/>
            <person name="Hata H."/>
            <person name="Watanabe M."/>
            <person name="Komatsu T."/>
            <person name="Mizushima-Sugano J."/>
            <person name="Satoh T."/>
            <person name="Shirai Y."/>
            <person name="Takahashi Y."/>
            <person name="Nakagawa K."/>
            <person name="Okumura K."/>
            <person name="Nagase T."/>
            <person name="Nomura N."/>
            <person name="Kikuchi H."/>
            <person name="Masuho Y."/>
            <person name="Yamashita R."/>
            <person name="Nakai K."/>
            <person name="Yada T."/>
            <person name="Nakamura Y."/>
            <person name="Ohara O."/>
            <person name="Isogai T."/>
            <person name="Sugano S."/>
        </authorList>
    </citation>
    <scope>NUCLEOTIDE SEQUENCE [LARGE SCALE MRNA]</scope>
    <source>
        <tissue>Brain</tissue>
    </source>
</reference>
<reference key="4">
    <citation type="submission" date="2005-07" db="EMBL/GenBank/DDBJ databases">
        <authorList>
            <person name="Mural R.J."/>
            <person name="Istrail S."/>
            <person name="Sutton G.G."/>
            <person name="Florea L."/>
            <person name="Halpern A.L."/>
            <person name="Mobarry C.M."/>
            <person name="Lippert R."/>
            <person name="Walenz B."/>
            <person name="Shatkay H."/>
            <person name="Dew I."/>
            <person name="Miller J.R."/>
            <person name="Flanigan M.J."/>
            <person name="Edwards N.J."/>
            <person name="Bolanos R."/>
            <person name="Fasulo D."/>
            <person name="Halldorsson B.V."/>
            <person name="Hannenhalli S."/>
            <person name="Turner R."/>
            <person name="Yooseph S."/>
            <person name="Lu F."/>
            <person name="Nusskern D.R."/>
            <person name="Shue B.C."/>
            <person name="Zheng X.H."/>
            <person name="Zhong F."/>
            <person name="Delcher A.L."/>
            <person name="Huson D.H."/>
            <person name="Kravitz S.A."/>
            <person name="Mouchard L."/>
            <person name="Reinert K."/>
            <person name="Remington K.A."/>
            <person name="Clark A.G."/>
            <person name="Waterman M.S."/>
            <person name="Eichler E.E."/>
            <person name="Adams M.D."/>
            <person name="Hunkapiller M.W."/>
            <person name="Myers E.W."/>
            <person name="Venter J.C."/>
        </authorList>
    </citation>
    <scope>NUCLEOTIDE SEQUENCE [LARGE SCALE GENOMIC DNA]</scope>
</reference>
<reference key="5">
    <citation type="journal article" date="2004" name="Genome Res.">
        <title>The status, quality, and expansion of the NIH full-length cDNA project: the Mammalian Gene Collection (MGC).</title>
        <authorList>
            <consortium name="The MGC Project Team"/>
        </authorList>
    </citation>
    <scope>NUCLEOTIDE SEQUENCE [LARGE SCALE MRNA]</scope>
</reference>
<reference key="6">
    <citation type="journal article" date="2007" name="BMC Genomics">
        <title>The full-ORF clone resource of the German cDNA consortium.</title>
        <authorList>
            <person name="Bechtel S."/>
            <person name="Rosenfelder H."/>
            <person name="Duda A."/>
            <person name="Schmidt C.P."/>
            <person name="Ernst U."/>
            <person name="Wellenreuther R."/>
            <person name="Mehrle A."/>
            <person name="Schuster C."/>
            <person name="Bahr A."/>
            <person name="Bloecker H."/>
            <person name="Heubner D."/>
            <person name="Hoerlein A."/>
            <person name="Michel G."/>
            <person name="Wedler H."/>
            <person name="Koehrer K."/>
            <person name="Ottenwaelder B."/>
            <person name="Poustka A."/>
            <person name="Wiemann S."/>
            <person name="Schupp I."/>
        </authorList>
    </citation>
    <scope>NUCLEOTIDE SEQUENCE [LARGE SCALE MRNA] OF 218-304</scope>
    <source>
        <tissue>Fetal kidney</tissue>
    </source>
</reference>
<reference key="7">
    <citation type="journal article" date="2017" name="Elife">
        <title>A protein phosphatase network controls the temporal and spatial dynamics of differentiation commitment in human epidermis.</title>
        <authorList>
            <person name="Mishra A."/>
            <person name="Oules B."/>
            <person name="Pisco A.O."/>
            <person name="Ly T."/>
            <person name="Liakath-Ali K."/>
            <person name="Walko G."/>
            <person name="Viswanathan P."/>
            <person name="Tihy M."/>
            <person name="Nijjher J."/>
            <person name="Dunn S.J."/>
            <person name="Lamond A.I."/>
            <person name="Watt F.M."/>
        </authorList>
    </citation>
    <scope>TISSUE SPECIFICITY</scope>
</reference>
<reference key="8">
    <citation type="journal article" date="2018" name="Biochim. Biophys. Acta">
        <title>The mitochondrial phosphatase PPTC7 orchestrates mitochondrial metabolism regulating coenzyme Q10 biosynthesis.</title>
        <authorList>
            <person name="Gonzalez-Mariscal I."/>
            <person name="Martin-Montalvo A."/>
            <person name="Vazquez-Fonseca L."/>
            <person name="Pomares-Viciana T."/>
            <person name="Sanchez-Cuesta A."/>
            <person name="Fernandez-Ayala D.J."/>
            <person name="Navas P."/>
            <person name="Santos-Ocana C."/>
        </authorList>
    </citation>
    <scope>FUNCTION</scope>
    <scope>CATALYTIC ACTIVITY</scope>
    <scope>COFACTOR</scope>
    <scope>ACTIVITY REGULATION</scope>
    <scope>SUBCELLULAR LOCATION</scope>
    <scope>INDUCTION</scope>
</reference>
<reference key="9">
    <citation type="journal article" date="2024" name="EMBO Rep.">
        <title>PPTC7 antagonizes mitophagy by promoting BNIP3 and NIX degradation via SCFFBXL4.</title>
        <authorList>
            <person name="Nguyen-Dien G.T."/>
            <person name="Townsend B."/>
            <person name="Kulkarni P.G."/>
            <person name="Kozul K.L."/>
            <person name="Ooi S.S."/>
            <person name="Eldershaw D.N."/>
            <person name="Weeratunga S."/>
            <person name="Liu M."/>
            <person name="Jones M.J."/>
            <person name="Millard S.S."/>
            <person name="Ng D.C."/>
            <person name="Pagano M."/>
            <person name="Bonfim-Melo A."/>
            <person name="Schneider T."/>
            <person name="Komander D."/>
            <person name="Lazarou M."/>
            <person name="Collins B.M."/>
            <person name="Pagan J.K."/>
        </authorList>
    </citation>
    <scope>FUNCTION</scope>
    <scope>INTERACTION WITH FBXL4; NIX AND BNIP3</scope>
</reference>
<keyword id="KW-0378">Hydrolase</keyword>
<keyword id="KW-0460">Magnesium</keyword>
<keyword id="KW-0464">Manganese</keyword>
<keyword id="KW-0479">Metal-binding</keyword>
<keyword id="KW-0496">Mitochondrion</keyword>
<keyword id="KW-0904">Protein phosphatase</keyword>
<keyword id="KW-1267">Proteomics identification</keyword>
<keyword id="KW-1185">Reference proteome</keyword>
<keyword id="KW-0809">Transit peptide</keyword>
<feature type="transit peptide" description="Mitochondrion" evidence="3">
    <location>
        <begin position="1"/>
        <end position="68"/>
    </location>
</feature>
<feature type="chain" id="PRO_0000328745" description="Protein phosphatase PTC7 homolog">
    <location>
        <begin position="69"/>
        <end position="304"/>
    </location>
</feature>
<feature type="domain" description="PPM-type phosphatase" evidence="4">
    <location>
        <begin position="69"/>
        <end position="299"/>
    </location>
</feature>
<feature type="binding site" evidence="1">
    <location>
        <position position="78"/>
    </location>
    <ligand>
        <name>Mn(2+)</name>
        <dbReference type="ChEBI" id="CHEBI:29035"/>
        <label>1</label>
    </ligand>
</feature>
<feature type="binding site" evidence="1">
    <location>
        <position position="78"/>
    </location>
    <ligand>
        <name>Mn(2+)</name>
        <dbReference type="ChEBI" id="CHEBI:29035"/>
        <label>2</label>
    </ligand>
</feature>
<feature type="binding site" evidence="1">
    <location>
        <position position="79"/>
    </location>
    <ligand>
        <name>Mn(2+)</name>
        <dbReference type="ChEBI" id="CHEBI:29035"/>
        <label>1</label>
    </ligand>
</feature>
<feature type="binding site" evidence="1">
    <location>
        <position position="223"/>
    </location>
    <ligand>
        <name>Mn(2+)</name>
        <dbReference type="ChEBI" id="CHEBI:29035"/>
        <label>2</label>
    </ligand>
</feature>
<feature type="sequence conflict" description="In Ref. 2; AAQ57274." evidence="9" ref="2">
    <location>
        <position position="27"/>
    </location>
</feature>
<feature type="sequence conflict" description="In Ref. 2; AAQ57274." evidence="9" ref="2">
    <original>C</original>
    <variation>R</variation>
    <location>
        <position position="124"/>
    </location>
</feature>
<feature type="sequence conflict" description="In Ref. 6; CAH18073." evidence="9" ref="6">
    <original>L</original>
    <variation>S</variation>
    <location>
        <position position="282"/>
    </location>
</feature>
<organism>
    <name type="scientific">Homo sapiens</name>
    <name type="common">Human</name>
    <dbReference type="NCBI Taxonomy" id="9606"/>
    <lineage>
        <taxon>Eukaryota</taxon>
        <taxon>Metazoa</taxon>
        <taxon>Chordata</taxon>
        <taxon>Craniata</taxon>
        <taxon>Vertebrata</taxon>
        <taxon>Euteleostomi</taxon>
        <taxon>Mammalia</taxon>
        <taxon>Eutheria</taxon>
        <taxon>Euarchontoglires</taxon>
        <taxon>Primates</taxon>
        <taxon>Haplorrhini</taxon>
        <taxon>Catarrhini</taxon>
        <taxon>Hominidae</taxon>
        <taxon>Homo</taxon>
    </lineage>
</organism>
<evidence type="ECO:0000250" key="1">
    <source>
        <dbReference type="UniProtKB" id="P35813"/>
    </source>
</evidence>
<evidence type="ECO:0000250" key="2">
    <source>
        <dbReference type="UniProtKB" id="Q6NVE9"/>
    </source>
</evidence>
<evidence type="ECO:0000255" key="3"/>
<evidence type="ECO:0000255" key="4">
    <source>
        <dbReference type="PROSITE-ProRule" id="PRU01082"/>
    </source>
</evidence>
<evidence type="ECO:0000269" key="5">
    <source>
    </source>
</evidence>
<evidence type="ECO:0000269" key="6">
    <source>
    </source>
</evidence>
<evidence type="ECO:0000269" key="7">
    <source>
    </source>
</evidence>
<evidence type="ECO:0000269" key="8">
    <source>
    </source>
</evidence>
<evidence type="ECO:0000305" key="9"/>
<comment type="function">
    <text evidence="2 7 8">Protein phosphatase that plays an essential role in mitochondrial metabolism and biogenesis (PubMed:30267671). Positively regulates biosynthesis of the ubiquinone, coenzyme Q (PubMed:30267671). Dephosphorylates the ubiquinone biosynthesis protein COQ7 which is likely to lead to its activation (PubMed:30267671). Serves as a crucial sensor for mitophagy, though the underlying mechanism remains ambiguous (By similarity). May dephosphorylate BNIP3 and NIX and thereby directly regulates mitophagy receptor function and stability (By similarity). Alternatively, promotes SCF-FBXL4-dependent ubiquitination and degradation of BNIP3 and NIX independently of its catalytic activity to restrain mitophagy (PubMed:38992176).</text>
</comment>
<comment type="catalytic activity">
    <reaction evidence="4">
        <text>O-phospho-L-seryl-[protein] + H2O = L-seryl-[protein] + phosphate</text>
        <dbReference type="Rhea" id="RHEA:20629"/>
        <dbReference type="Rhea" id="RHEA-COMP:9863"/>
        <dbReference type="Rhea" id="RHEA-COMP:11604"/>
        <dbReference type="ChEBI" id="CHEBI:15377"/>
        <dbReference type="ChEBI" id="CHEBI:29999"/>
        <dbReference type="ChEBI" id="CHEBI:43474"/>
        <dbReference type="ChEBI" id="CHEBI:83421"/>
        <dbReference type="EC" id="3.1.3.16"/>
    </reaction>
</comment>
<comment type="catalytic activity">
    <reaction evidence="7">
        <text>O-phospho-L-threonyl-[protein] + H2O = L-threonyl-[protein] + phosphate</text>
        <dbReference type="Rhea" id="RHEA:47004"/>
        <dbReference type="Rhea" id="RHEA-COMP:11060"/>
        <dbReference type="Rhea" id="RHEA-COMP:11605"/>
        <dbReference type="ChEBI" id="CHEBI:15377"/>
        <dbReference type="ChEBI" id="CHEBI:30013"/>
        <dbReference type="ChEBI" id="CHEBI:43474"/>
        <dbReference type="ChEBI" id="CHEBI:61977"/>
        <dbReference type="EC" id="3.1.3.16"/>
    </reaction>
</comment>
<comment type="cofactor">
    <cofactor evidence="7">
        <name>Mg(2+)</name>
        <dbReference type="ChEBI" id="CHEBI:18420"/>
    </cofactor>
    <cofactor evidence="7">
        <name>Mn(2+)</name>
        <dbReference type="ChEBI" id="CHEBI:29035"/>
    </cofactor>
    <text evidence="4">Binds 2 magnesium or manganese ions per subunit.</text>
</comment>
<comment type="activity regulation">
    <text evidence="7">Inhibited by sodium orthovanadate.</text>
</comment>
<comment type="subunit">
    <text evidence="8">Interacts with FBXL4, BNIP3 and NIX; these interactions are important for ubiquitination and degradation of BNIP3 and NIX (PubMed:38992176).</text>
</comment>
<comment type="interaction">
    <interactant intactId="EBI-9089276">
        <id>Q8NI37</id>
    </interactant>
    <interactant intactId="EBI-765407">
        <id>P41182</id>
        <label>BCL6</label>
    </interactant>
    <organismsDiffer>false</organismsDiffer>
    <experiments>3</experiments>
</comment>
<comment type="interaction">
    <interactant intactId="EBI-9089276">
        <id>Q8NI37</id>
    </interactant>
    <interactant intactId="EBI-749464">
        <id>Q12983</id>
        <label>BNIP3</label>
    </interactant>
    <organismsDiffer>false</organismsDiffer>
    <experiments>10</experiments>
</comment>
<comment type="interaction">
    <interactant intactId="EBI-9089276">
        <id>Q8NI37</id>
    </interactant>
    <interactant intactId="EBI-10976677">
        <id>G5E9A7</id>
        <label>DMWD</label>
    </interactant>
    <organismsDiffer>false</organismsDiffer>
    <experiments>3</experiments>
</comment>
<comment type="interaction">
    <interactant intactId="EBI-9089276">
        <id>Q8NI37</id>
    </interactant>
    <interactant intactId="EBI-475646">
        <id>P07196</id>
        <label>NEFL</label>
    </interactant>
    <organismsDiffer>false</organismsDiffer>
    <experiments>3</experiments>
</comment>
<comment type="interaction">
    <interactant intactId="EBI-9089276">
        <id>Q8NI37</id>
    </interactant>
    <interactant intactId="EBI-740845">
        <id>Q96AQ6</id>
        <label>PBXIP1</label>
    </interactant>
    <organismsDiffer>false</organismsDiffer>
    <experiments>3</experiments>
</comment>
<comment type="interaction">
    <interactant intactId="EBI-9089276">
        <id>Q8NI37</id>
    </interactant>
    <interactant intactId="EBI-5235340">
        <id>Q7Z699</id>
        <label>SPRED1</label>
    </interactant>
    <organismsDiffer>false</organismsDiffer>
    <experiments>3</experiments>
</comment>
<comment type="interaction">
    <interactant intactId="EBI-9089276">
        <id>Q8NI37</id>
    </interactant>
    <interactant intactId="EBI-720609">
        <id>O76024</id>
        <label>WFS1</label>
    </interactant>
    <organismsDiffer>false</organismsDiffer>
    <experiments>3</experiments>
</comment>
<comment type="subcellular location">
    <subcellularLocation>
        <location evidence="7">Mitochondrion matrix</location>
    </subcellularLocation>
</comment>
<comment type="tissue specificity">
    <text evidence="6">Expressed in keratinocytes (at protein level).</text>
</comment>
<comment type="induction">
    <text evidence="5 7">By hydrogen peroxide and nutrional stress (such as low glucose) (PubMed:30267671). Up-regulated during lymphocyte activation (PubMed:15177553).</text>
</comment>
<comment type="similarity">
    <text evidence="9">Belongs to the PP2C family.</text>
</comment>